<dbReference type="EMBL" id="CP001283">
    <property type="protein sequence ID" value="ACK92261.1"/>
    <property type="molecule type" value="Genomic_DNA"/>
</dbReference>
<dbReference type="RefSeq" id="WP_000142467.1">
    <property type="nucleotide sequence ID" value="NC_011773.1"/>
</dbReference>
<dbReference type="KEGG" id="bcu:BCAH820_5416"/>
<dbReference type="HOGENOM" id="CLU_096410_1_0_9"/>
<dbReference type="Proteomes" id="UP000001363">
    <property type="component" value="Chromosome"/>
</dbReference>
<dbReference type="GO" id="GO:0005886">
    <property type="term" value="C:plasma membrane"/>
    <property type="evidence" value="ECO:0007669"/>
    <property type="project" value="UniProtKB-SubCell"/>
</dbReference>
<dbReference type="GO" id="GO:0005384">
    <property type="term" value="F:manganese ion transmembrane transporter activity"/>
    <property type="evidence" value="ECO:0007669"/>
    <property type="project" value="UniProtKB-UniRule"/>
</dbReference>
<dbReference type="HAMAP" id="MF_01521">
    <property type="entry name" value="MntP_pump"/>
    <property type="match status" value="1"/>
</dbReference>
<dbReference type="InterPro" id="IPR003810">
    <property type="entry name" value="Mntp/YtaF"/>
</dbReference>
<dbReference type="InterPro" id="IPR022929">
    <property type="entry name" value="Put_MntP"/>
</dbReference>
<dbReference type="PANTHER" id="PTHR35529">
    <property type="entry name" value="MANGANESE EFFLUX PUMP MNTP-RELATED"/>
    <property type="match status" value="1"/>
</dbReference>
<dbReference type="PANTHER" id="PTHR35529:SF1">
    <property type="entry name" value="MANGANESE EFFLUX PUMP MNTP-RELATED"/>
    <property type="match status" value="1"/>
</dbReference>
<dbReference type="Pfam" id="PF02659">
    <property type="entry name" value="Mntp"/>
    <property type="match status" value="1"/>
</dbReference>
<feature type="chain" id="PRO_1000200010" description="Putative manganese efflux pump MntP">
    <location>
        <begin position="1"/>
        <end position="182"/>
    </location>
</feature>
<feature type="transmembrane region" description="Helical" evidence="1">
    <location>
        <begin position="6"/>
        <end position="26"/>
    </location>
</feature>
<feature type="transmembrane region" description="Helical" evidence="1">
    <location>
        <begin position="37"/>
        <end position="57"/>
    </location>
</feature>
<feature type="transmembrane region" description="Helical" evidence="1">
    <location>
        <begin position="71"/>
        <end position="91"/>
    </location>
</feature>
<feature type="transmembrane region" description="Helical" evidence="1">
    <location>
        <begin position="101"/>
        <end position="121"/>
    </location>
</feature>
<feature type="transmembrane region" description="Helical" evidence="1">
    <location>
        <begin position="131"/>
        <end position="151"/>
    </location>
</feature>
<feature type="transmembrane region" description="Helical" evidence="1">
    <location>
        <begin position="162"/>
        <end position="182"/>
    </location>
</feature>
<organism>
    <name type="scientific">Bacillus cereus (strain AH820)</name>
    <dbReference type="NCBI Taxonomy" id="405535"/>
    <lineage>
        <taxon>Bacteria</taxon>
        <taxon>Bacillati</taxon>
        <taxon>Bacillota</taxon>
        <taxon>Bacilli</taxon>
        <taxon>Bacillales</taxon>
        <taxon>Bacillaceae</taxon>
        <taxon>Bacillus</taxon>
        <taxon>Bacillus cereus group</taxon>
    </lineage>
</organism>
<gene>
    <name evidence="1" type="primary">mntP</name>
    <name type="ordered locus">BCAH820_5416</name>
</gene>
<accession>B7JGQ0</accession>
<keyword id="KW-1003">Cell membrane</keyword>
<keyword id="KW-0406">Ion transport</keyword>
<keyword id="KW-0464">Manganese</keyword>
<keyword id="KW-0472">Membrane</keyword>
<keyword id="KW-0812">Transmembrane</keyword>
<keyword id="KW-1133">Transmembrane helix</keyword>
<keyword id="KW-0813">Transport</keyword>
<protein>
    <recommendedName>
        <fullName evidence="1">Putative manganese efflux pump MntP</fullName>
    </recommendedName>
</protein>
<proteinExistence type="inferred from homology"/>
<name>MNTP_BACC0</name>
<evidence type="ECO:0000255" key="1">
    <source>
        <dbReference type="HAMAP-Rule" id="MF_01521"/>
    </source>
</evidence>
<comment type="function">
    <text evidence="1">Probably functions as a manganese efflux pump.</text>
</comment>
<comment type="subcellular location">
    <subcellularLocation>
        <location evidence="1">Cell membrane</location>
        <topology evidence="1">Multi-pass membrane protein</topology>
    </subcellularLocation>
</comment>
<comment type="similarity">
    <text evidence="1">Belongs to the MntP (TC 9.B.29) family.</text>
</comment>
<reference key="1">
    <citation type="submission" date="2008-10" db="EMBL/GenBank/DDBJ databases">
        <title>Genome sequence of Bacillus cereus AH820.</title>
        <authorList>
            <person name="Dodson R.J."/>
            <person name="Durkin A.S."/>
            <person name="Rosovitz M.J."/>
            <person name="Rasko D.A."/>
            <person name="Hoffmaster A."/>
            <person name="Ravel J."/>
            <person name="Sutton G."/>
        </authorList>
    </citation>
    <scope>NUCLEOTIDE SEQUENCE [LARGE SCALE GENOMIC DNA]</scope>
    <source>
        <strain>AH820</strain>
    </source>
</reference>
<sequence>MTFEQLIPLIIMAFALGMDAFSVSLGMGMMALKIRQILYIGVTIGIFHIIMPFIGMVLGRFLSEQYGDIAHFAGAILLIGLGFYIVYSSILENEETRTAPIGISLFVFAFGVSIDSFSVGLSLGIYGAQTIITILLFGFVSMLLAWIGLLIGRHAKGMLGTYGEIVGGIILVGFGLYLLFPI</sequence>